<keyword id="KW-0378">Hydrolase</keyword>
<keyword id="KW-0472">Membrane</keyword>
<keyword id="KW-0645">Protease</keyword>
<keyword id="KW-0964">Secreted</keyword>
<keyword id="KW-0788">Thiol protease</keyword>
<keyword id="KW-0812">Transmembrane</keyword>
<keyword id="KW-1133">Transmembrane helix</keyword>
<keyword id="KW-0833">Ubl conjugation pathway</keyword>
<keyword id="KW-0843">Virulence</keyword>
<gene>
    <name type="primary">cdu1</name>
    <name type="ordered locus">CTB_8791</name>
</gene>
<name>CDUB1_CHLTZ</name>
<evidence type="ECO:0000250" key="1"/>
<evidence type="ECO:0000255" key="2"/>
<evidence type="ECO:0000256" key="3">
    <source>
        <dbReference type="SAM" id="MobiDB-lite"/>
    </source>
</evidence>
<evidence type="ECO:0000305" key="4"/>
<organism>
    <name type="scientific">Chlamydia trachomatis serovar B (strain TZ1A828/OT)</name>
    <dbReference type="NCBI Taxonomy" id="672161"/>
    <lineage>
        <taxon>Bacteria</taxon>
        <taxon>Pseudomonadati</taxon>
        <taxon>Chlamydiota</taxon>
        <taxon>Chlamydiia</taxon>
        <taxon>Chlamydiales</taxon>
        <taxon>Chlamydiaceae</taxon>
        <taxon>Chlamydia/Chlamydophila group</taxon>
        <taxon>Chlamydia</taxon>
    </lineage>
</organism>
<comment type="function">
    <text evidence="1">Effector proteins function to alter host cell physiology and promote bacterial survival in host tissues. This protease possesses deubiquitinating and deneddylating activities (By similarity).</text>
</comment>
<comment type="subcellular location">
    <subcellularLocation>
        <location evidence="1">Secreted</location>
    </subcellularLocation>
    <subcellularLocation>
        <location evidence="1">Host cell</location>
    </subcellularLocation>
    <subcellularLocation>
        <location evidence="1">Membrane</location>
        <topology evidence="1">Single-pass membrane protein</topology>
    </subcellularLocation>
    <text evidence="1">Secreted, and delivered into the host cell.</text>
</comment>
<comment type="similarity">
    <text evidence="4">Belongs to the peptidase C48 family.</text>
</comment>
<protein>
    <recommendedName>
        <fullName>Deubiquitinase and deneddylase Dub1</fullName>
        <shortName>ChlaDub1</shortName>
        <ecNumber>3.4.22.-</ecNumber>
    </recommendedName>
</protein>
<dbReference type="EC" id="3.4.22.-"/>
<dbReference type="EMBL" id="FM872307">
    <property type="protein sequence ID" value="CAX10439.1"/>
    <property type="molecule type" value="Genomic_DNA"/>
</dbReference>
<dbReference type="RefSeq" id="WP_012728210.1">
    <property type="nucleotide sequence ID" value="NC_012687.1"/>
</dbReference>
<dbReference type="SMR" id="C4PLJ5"/>
<dbReference type="MEROPS" id="C48.032"/>
<dbReference type="KEGG" id="ctz:CTB_8791"/>
<dbReference type="HOGENOM" id="CLU_067510_0_0_0"/>
<dbReference type="GO" id="GO:0005576">
    <property type="term" value="C:extracellular region"/>
    <property type="evidence" value="ECO:0000250"/>
    <property type="project" value="UniProtKB"/>
</dbReference>
<dbReference type="GO" id="GO:0043657">
    <property type="term" value="C:host cell"/>
    <property type="evidence" value="ECO:0007669"/>
    <property type="project" value="UniProtKB-SubCell"/>
</dbReference>
<dbReference type="GO" id="GO:0016020">
    <property type="term" value="C:membrane"/>
    <property type="evidence" value="ECO:0007669"/>
    <property type="project" value="UniProtKB-SubCell"/>
</dbReference>
<dbReference type="GO" id="GO:0004843">
    <property type="term" value="F:cysteine-type deubiquitinase activity"/>
    <property type="evidence" value="ECO:0000250"/>
    <property type="project" value="UniProtKB"/>
</dbReference>
<dbReference type="GO" id="GO:0019784">
    <property type="term" value="F:deNEDDylase activity"/>
    <property type="evidence" value="ECO:0000250"/>
    <property type="project" value="UniProtKB"/>
</dbReference>
<dbReference type="GO" id="GO:0000338">
    <property type="term" value="P:protein deneddylation"/>
    <property type="evidence" value="ECO:0000250"/>
    <property type="project" value="UniProtKB"/>
</dbReference>
<dbReference type="GO" id="GO:0016579">
    <property type="term" value="P:protein deubiquitination"/>
    <property type="evidence" value="ECO:0000250"/>
    <property type="project" value="UniProtKB"/>
</dbReference>
<dbReference type="GO" id="GO:0006508">
    <property type="term" value="P:proteolysis"/>
    <property type="evidence" value="ECO:0007669"/>
    <property type="project" value="UniProtKB-KW"/>
</dbReference>
<dbReference type="FunFam" id="3.40.395.10:FF:000016">
    <property type="entry name" value="Deubiquitinase and deneddylase Dub1"/>
    <property type="match status" value="1"/>
</dbReference>
<dbReference type="Gene3D" id="3.40.395.10">
    <property type="entry name" value="Adenoviral Proteinase, Chain A"/>
    <property type="match status" value="1"/>
</dbReference>
<dbReference type="InterPro" id="IPR038765">
    <property type="entry name" value="Papain-like_cys_pep_sf"/>
</dbReference>
<dbReference type="InterPro" id="IPR003653">
    <property type="entry name" value="Peptidase_C48_C"/>
</dbReference>
<dbReference type="Pfam" id="PF02902">
    <property type="entry name" value="Peptidase_C48"/>
    <property type="match status" value="1"/>
</dbReference>
<dbReference type="PRINTS" id="PR01217">
    <property type="entry name" value="PRICHEXTENSN"/>
</dbReference>
<dbReference type="SUPFAM" id="SSF54001">
    <property type="entry name" value="Cysteine proteinases"/>
    <property type="match status" value="1"/>
</dbReference>
<feature type="chain" id="PRO_0000396492" description="Deubiquitinase and deneddylase Dub1">
    <location>
        <begin position="1"/>
        <end position="418"/>
    </location>
</feature>
<feature type="transmembrane region" description="Helical" evidence="2">
    <location>
        <begin position="40"/>
        <end position="60"/>
    </location>
</feature>
<feature type="region of interest" description="Disordered" evidence="3">
    <location>
        <begin position="1"/>
        <end position="23"/>
    </location>
</feature>
<feature type="region of interest" description="Disordered" evidence="3">
    <location>
        <begin position="72"/>
        <end position="144"/>
    </location>
</feature>
<feature type="compositionally biased region" description="Polar residues" evidence="3">
    <location>
        <begin position="1"/>
        <end position="10"/>
    </location>
</feature>
<feature type="compositionally biased region" description="Pro residues" evidence="3">
    <location>
        <begin position="86"/>
        <end position="141"/>
    </location>
</feature>
<feature type="active site" evidence="2">
    <location>
        <position position="288"/>
    </location>
</feature>
<feature type="active site" evidence="2">
    <location>
        <position position="305"/>
    </location>
</feature>
<feature type="active site" evidence="2">
    <location>
        <position position="358"/>
    </location>
</feature>
<proteinExistence type="inferred from homology"/>
<reference key="1">
    <citation type="journal article" date="2009" name="BMC Genomics">
        <title>Co-evolution of genomes and plasmids within Chlamydia trachomatis and the emergence in Sweden of a new variant strain.</title>
        <authorList>
            <person name="Seth-Smith H.M.B."/>
            <person name="Harris S.R."/>
            <person name="Persson K."/>
            <person name="Marsh P."/>
            <person name="Barron A."/>
            <person name="Bignell A."/>
            <person name="Bjartling C."/>
            <person name="Clark L."/>
            <person name="Cutcliffe L.T."/>
            <person name="Lambden P.R."/>
            <person name="Lennard N."/>
            <person name="Lockey S.J."/>
            <person name="Quail M.A."/>
            <person name="Salim O."/>
            <person name="Skilton R.J."/>
            <person name="Wang Y."/>
            <person name="Holland M.J."/>
            <person name="Parkhill J."/>
            <person name="Thomson N.R."/>
            <person name="Clarke I.N."/>
        </authorList>
    </citation>
    <scope>NUCLEOTIDE SEQUENCE [LARGE SCALE GENOMIC DNA]</scope>
    <source>
        <strain>TZ1A828/OT</strain>
    </source>
</reference>
<sequence length="418" mass="46678">MLSPTNSISKTAPVPPQDSSKPVLISEEPQNQLLQKVARTALAVLLVVVTLGLILLFYSFSDLQSFPWCCQTRPSTKEQPTISIPVPLPSPPLAVPRPSTPPPPVISRPSTPPAPTPAISPPSTPSAPKPSTPPPLPPKAPKPVKTQEDLLPFVPEQVFVEMYEDMARRRIIEALVPAWDSDIIFKCLCYFHTLYQGLIPLETFPPATIFNFKQKIISILEDKKAVLRGEPIKGSLPICCSEENYRRHLQGTTLLPVFMWYHPTPKTLSDTMQTMKQLAIKGSVGASHWLLVIVDIQARRLVYFDSLYNYVMSPEDMKKDLQSFAQQLDQVYPAYDSQKFSVKIAAKEVIQKGSGSSCGAWCCQFLHWYLRDPFTDALNDLPVDSVERHENLASFVQACEAAVQDLPELFWPEAKALF</sequence>
<accession>C4PLJ5</accession>